<name>DADA_METRJ</name>
<organism>
    <name type="scientific">Methylobacterium radiotolerans (strain ATCC 27329 / DSM 1819 / JCM 2831 / NBRC 15690 / NCIMB 10815 / 0-1)</name>
    <dbReference type="NCBI Taxonomy" id="426355"/>
    <lineage>
        <taxon>Bacteria</taxon>
        <taxon>Pseudomonadati</taxon>
        <taxon>Pseudomonadota</taxon>
        <taxon>Alphaproteobacteria</taxon>
        <taxon>Hyphomicrobiales</taxon>
        <taxon>Methylobacteriaceae</taxon>
        <taxon>Methylobacterium</taxon>
    </lineage>
</organism>
<accession>B1M860</accession>
<gene>
    <name evidence="1" type="primary">dadA</name>
    <name type="ordered locus">Mrad2831_4821</name>
</gene>
<reference key="1">
    <citation type="submission" date="2008-03" db="EMBL/GenBank/DDBJ databases">
        <title>Complete sequence of chromosome of Methylobacterium radiotolerans JCM 2831.</title>
        <authorList>
            <consortium name="US DOE Joint Genome Institute"/>
            <person name="Copeland A."/>
            <person name="Lucas S."/>
            <person name="Lapidus A."/>
            <person name="Glavina del Rio T."/>
            <person name="Dalin E."/>
            <person name="Tice H."/>
            <person name="Bruce D."/>
            <person name="Goodwin L."/>
            <person name="Pitluck S."/>
            <person name="Kiss H."/>
            <person name="Brettin T."/>
            <person name="Detter J.C."/>
            <person name="Han C."/>
            <person name="Kuske C.R."/>
            <person name="Schmutz J."/>
            <person name="Larimer F."/>
            <person name="Land M."/>
            <person name="Hauser L."/>
            <person name="Kyrpides N."/>
            <person name="Mikhailova N."/>
            <person name="Marx C.J."/>
            <person name="Richardson P."/>
        </authorList>
    </citation>
    <scope>NUCLEOTIDE SEQUENCE [LARGE SCALE GENOMIC DNA]</scope>
    <source>
        <strain>ATCC 27329 / DSM 1819 / JCM 2831 / NBRC 15690 / NCIMB 10815 / 0-1</strain>
    </source>
</reference>
<evidence type="ECO:0000255" key="1">
    <source>
        <dbReference type="HAMAP-Rule" id="MF_01202"/>
    </source>
</evidence>
<keyword id="KW-0274">FAD</keyword>
<keyword id="KW-0285">Flavoprotein</keyword>
<keyword id="KW-0560">Oxidoreductase</keyword>
<comment type="function">
    <text evidence="1">Oxidative deamination of D-amino acids.</text>
</comment>
<comment type="catalytic activity">
    <reaction evidence="1">
        <text>a D-alpha-amino acid + A + H2O = a 2-oxocarboxylate + AH2 + NH4(+)</text>
        <dbReference type="Rhea" id="RHEA:18125"/>
        <dbReference type="ChEBI" id="CHEBI:13193"/>
        <dbReference type="ChEBI" id="CHEBI:15377"/>
        <dbReference type="ChEBI" id="CHEBI:17499"/>
        <dbReference type="ChEBI" id="CHEBI:28938"/>
        <dbReference type="ChEBI" id="CHEBI:35179"/>
        <dbReference type="ChEBI" id="CHEBI:59871"/>
    </reaction>
</comment>
<comment type="cofactor">
    <cofactor evidence="1">
        <name>FAD</name>
        <dbReference type="ChEBI" id="CHEBI:57692"/>
    </cofactor>
</comment>
<comment type="pathway">
    <text>Amino-acid degradation; D-alanine degradation; NH(3) and pyruvate from D-alanine: step 1/1.</text>
</comment>
<comment type="similarity">
    <text evidence="1">Belongs to the DadA oxidoreductase family.</text>
</comment>
<feature type="chain" id="PRO_1000138657" description="D-amino acid dehydrogenase">
    <location>
        <begin position="1"/>
        <end position="419"/>
    </location>
</feature>
<feature type="binding site" evidence="1">
    <location>
        <begin position="3"/>
        <end position="17"/>
    </location>
    <ligand>
        <name>FAD</name>
        <dbReference type="ChEBI" id="CHEBI:57692"/>
    </ligand>
</feature>
<protein>
    <recommendedName>
        <fullName evidence="1">D-amino acid dehydrogenase</fullName>
        <ecNumber evidence="1">1.4.99.-</ecNumber>
    </recommendedName>
</protein>
<dbReference type="EC" id="1.4.99.-" evidence="1"/>
<dbReference type="EMBL" id="CP001001">
    <property type="protein sequence ID" value="ACB26781.1"/>
    <property type="molecule type" value="Genomic_DNA"/>
</dbReference>
<dbReference type="RefSeq" id="WP_012321732.1">
    <property type="nucleotide sequence ID" value="NC_010505.1"/>
</dbReference>
<dbReference type="SMR" id="B1M860"/>
<dbReference type="STRING" id="426355.Mrad2831_4821"/>
<dbReference type="GeneID" id="6140889"/>
<dbReference type="KEGG" id="mrd:Mrad2831_4821"/>
<dbReference type="PATRIC" id="fig|426355.14.peg.4889"/>
<dbReference type="eggNOG" id="COG0665">
    <property type="taxonomic scope" value="Bacteria"/>
</dbReference>
<dbReference type="HOGENOM" id="CLU_007884_9_2_5"/>
<dbReference type="OrthoDB" id="9805337at2"/>
<dbReference type="UniPathway" id="UPA00043">
    <property type="reaction ID" value="UER00498"/>
</dbReference>
<dbReference type="Proteomes" id="UP000006589">
    <property type="component" value="Chromosome"/>
</dbReference>
<dbReference type="GO" id="GO:0005737">
    <property type="term" value="C:cytoplasm"/>
    <property type="evidence" value="ECO:0007669"/>
    <property type="project" value="TreeGrafter"/>
</dbReference>
<dbReference type="GO" id="GO:0005886">
    <property type="term" value="C:plasma membrane"/>
    <property type="evidence" value="ECO:0007669"/>
    <property type="project" value="TreeGrafter"/>
</dbReference>
<dbReference type="GO" id="GO:0008718">
    <property type="term" value="F:D-amino-acid dehydrogenase activity"/>
    <property type="evidence" value="ECO:0007669"/>
    <property type="project" value="UniProtKB-UniRule"/>
</dbReference>
<dbReference type="GO" id="GO:0055130">
    <property type="term" value="P:D-alanine catabolic process"/>
    <property type="evidence" value="ECO:0007669"/>
    <property type="project" value="UniProtKB-UniPathway"/>
</dbReference>
<dbReference type="FunFam" id="3.50.50.60:FF:000020">
    <property type="entry name" value="D-amino acid dehydrogenase"/>
    <property type="match status" value="1"/>
</dbReference>
<dbReference type="Gene3D" id="3.30.9.10">
    <property type="entry name" value="D-Amino Acid Oxidase, subunit A, domain 2"/>
    <property type="match status" value="1"/>
</dbReference>
<dbReference type="Gene3D" id="3.50.50.60">
    <property type="entry name" value="FAD/NAD(P)-binding domain"/>
    <property type="match status" value="2"/>
</dbReference>
<dbReference type="HAMAP" id="MF_01202">
    <property type="entry name" value="DadA"/>
    <property type="match status" value="1"/>
</dbReference>
<dbReference type="InterPro" id="IPR023080">
    <property type="entry name" value="DadA"/>
</dbReference>
<dbReference type="InterPro" id="IPR006076">
    <property type="entry name" value="FAD-dep_OxRdtase"/>
</dbReference>
<dbReference type="InterPro" id="IPR036188">
    <property type="entry name" value="FAD/NAD-bd_sf"/>
</dbReference>
<dbReference type="NCBIfam" id="NF001933">
    <property type="entry name" value="PRK00711.1"/>
    <property type="match status" value="1"/>
</dbReference>
<dbReference type="PANTHER" id="PTHR13847:SF280">
    <property type="entry name" value="D-AMINO ACID DEHYDROGENASE"/>
    <property type="match status" value="1"/>
</dbReference>
<dbReference type="PANTHER" id="PTHR13847">
    <property type="entry name" value="SARCOSINE DEHYDROGENASE-RELATED"/>
    <property type="match status" value="1"/>
</dbReference>
<dbReference type="Pfam" id="PF01266">
    <property type="entry name" value="DAO"/>
    <property type="match status" value="1"/>
</dbReference>
<dbReference type="SUPFAM" id="SSF54373">
    <property type="entry name" value="FAD-linked reductases, C-terminal domain"/>
    <property type="match status" value="1"/>
</dbReference>
<dbReference type="SUPFAM" id="SSF51905">
    <property type="entry name" value="FAD/NAD(P)-binding domain"/>
    <property type="match status" value="1"/>
</dbReference>
<sequence length="419" mass="45004">MHVLILGGGVVGVTSAYYLARAGHQVTVLERQPGAGLETSFANAGQVSPGYSAPWAAPGIPVKALRWLMMRHRPLVLWPRLEPRLYAWLTRMLANCTEEAYRRNKGRMVRLAEYSRDALRDLRTETGIAYDHREKGTLQLFRTRKQLDHVGDDTRVLDAYGVPYTVLDPAGCIAAEPALAAVRDVFVGGLRLPGDETGDAHLFTQRLAALCESLGVTFRYGTAIARLHHAGDRVTAVETADGALLRADAYVAALGSYTPALLRPLGIALPVYPVKGYSLTLPITDAEAAPVSTVMDETYKVAITRLGDRIRVGGTAELAGFSNALRGPRRETLARSVQDLFPAGGDLDKASFWTGLRPMTPDGTPIVGGTRVGNLFTNTGHGTLGWTMACGSGRLLADLVSGRAPEIASDDLALGRYAA</sequence>
<proteinExistence type="inferred from homology"/>